<keyword id="KW-0158">Chromosome</keyword>
<keyword id="KW-0235">DNA replication</keyword>
<keyword id="KW-0238">DNA-binding</keyword>
<keyword id="KW-0539">Nucleus</keyword>
<keyword id="KW-0597">Phosphoprotein</keyword>
<keyword id="KW-1185">Reference proteome</keyword>
<keyword id="KW-0832">Ubl conjugation</keyword>
<dbReference type="EMBL" id="BC108095">
    <property type="protein sequence ID" value="AAI08096.1"/>
    <property type="molecule type" value="mRNA"/>
</dbReference>
<dbReference type="RefSeq" id="NP_001033228.1">
    <property type="nucleotide sequence ID" value="NM_001038139.1"/>
</dbReference>
<dbReference type="SMR" id="Q32PJ3"/>
<dbReference type="FunCoup" id="Q32PJ3">
    <property type="interactions" value="2776"/>
</dbReference>
<dbReference type="STRING" id="9913.ENSBTAP00000022571"/>
<dbReference type="PaxDb" id="9913-ENSBTAP00000022571"/>
<dbReference type="GeneID" id="523714"/>
<dbReference type="KEGG" id="bta:523714"/>
<dbReference type="CTD" id="23595"/>
<dbReference type="eggNOG" id="KOG2538">
    <property type="taxonomic scope" value="Eukaryota"/>
</dbReference>
<dbReference type="InParanoid" id="Q32PJ3"/>
<dbReference type="OrthoDB" id="10265211at2759"/>
<dbReference type="Proteomes" id="UP000009136">
    <property type="component" value="Unplaced"/>
</dbReference>
<dbReference type="GO" id="GO:0000785">
    <property type="term" value="C:chromatin"/>
    <property type="evidence" value="ECO:0000250"/>
    <property type="project" value="UniProtKB"/>
</dbReference>
<dbReference type="GO" id="GO:0031261">
    <property type="term" value="C:DNA replication preinitiation complex"/>
    <property type="evidence" value="ECO:0000318"/>
    <property type="project" value="GO_Central"/>
</dbReference>
<dbReference type="GO" id="GO:0005664">
    <property type="term" value="C:nuclear origin of replication recognition complex"/>
    <property type="evidence" value="ECO:0000250"/>
    <property type="project" value="UniProtKB"/>
</dbReference>
<dbReference type="GO" id="GO:0005656">
    <property type="term" value="C:nuclear pre-replicative complex"/>
    <property type="evidence" value="ECO:0000318"/>
    <property type="project" value="GO_Central"/>
</dbReference>
<dbReference type="GO" id="GO:0003688">
    <property type="term" value="F:DNA replication origin binding"/>
    <property type="evidence" value="ECO:0000318"/>
    <property type="project" value="GO_Central"/>
</dbReference>
<dbReference type="GO" id="GO:0006270">
    <property type="term" value="P:DNA replication initiation"/>
    <property type="evidence" value="ECO:0000318"/>
    <property type="project" value="GO_Central"/>
</dbReference>
<dbReference type="GO" id="GO:0006275">
    <property type="term" value="P:regulation of DNA replication"/>
    <property type="evidence" value="ECO:0000250"/>
    <property type="project" value="UniProtKB"/>
</dbReference>
<dbReference type="CDD" id="cd20704">
    <property type="entry name" value="Orc3"/>
    <property type="match status" value="1"/>
</dbReference>
<dbReference type="InterPro" id="IPR020795">
    <property type="entry name" value="ORC3"/>
</dbReference>
<dbReference type="InterPro" id="IPR045663">
    <property type="entry name" value="ORC3_ins"/>
</dbReference>
<dbReference type="InterPro" id="IPR045667">
    <property type="entry name" value="ORC3_N"/>
</dbReference>
<dbReference type="InterPro" id="IPR040855">
    <property type="entry name" value="ORC_WH_C"/>
</dbReference>
<dbReference type="PANTHER" id="PTHR12748">
    <property type="entry name" value="ORIGIN RECOGNITION COMPLEX SUBUNIT 3"/>
    <property type="match status" value="1"/>
</dbReference>
<dbReference type="PANTHER" id="PTHR12748:SF0">
    <property type="entry name" value="ORIGIN RECOGNITION COMPLEX SUBUNIT 3"/>
    <property type="match status" value="1"/>
</dbReference>
<dbReference type="Pfam" id="PF19675">
    <property type="entry name" value="ORC3_ins"/>
    <property type="match status" value="1"/>
</dbReference>
<dbReference type="Pfam" id="PF07034">
    <property type="entry name" value="ORC3_N"/>
    <property type="match status" value="1"/>
</dbReference>
<dbReference type="Pfam" id="PF18137">
    <property type="entry name" value="ORC_WH_C"/>
    <property type="match status" value="1"/>
</dbReference>
<protein>
    <recommendedName>
        <fullName>Origin recognition complex subunit 3</fullName>
    </recommendedName>
</protein>
<accession>Q32PJ3</accession>
<reference key="1">
    <citation type="submission" date="2005-10" db="EMBL/GenBank/DDBJ databases">
        <authorList>
            <consortium name="NIH - Mammalian Gene Collection (MGC) project"/>
        </authorList>
    </citation>
    <scope>NUCLEOTIDE SEQUENCE [LARGE SCALE MRNA]</scope>
    <source>
        <strain>Crossbred X Angus</strain>
        <tissue>Ileum</tissue>
    </source>
</reference>
<gene>
    <name type="primary">ORC3</name>
    <name type="synonym">ORC3L</name>
</gene>
<name>ORC3_BOVIN</name>
<sequence>MATSSVSKGCFVFKPNFKKRKISVPIEDYFNKGKNASEDSKLRFETYQLIWQQMKSETERLQEELNKNLFDSLVEFLQTSHSGLWKNSKDWSCEIKLREIPTAALVLGVNVTDHDLTLRSLTEVLQNNVTPYVVSLQAKDCPDMKHFLQKLVSQLMDCKVDVQSKEKESVQVIQKNVHYSMDSLSAWYMSVTQKTDPKMPRKKRTSSSQWQSPPVVLILKDMESFTTKVLQDFIIISSQHLHEFPLILIFGIATSPVVIHRLLPHAVSSLLCIELFQSLSCKEHLTTVLDKLLLTTQFPFKLSEKVLQILTNIFLYHDFSIQNFIKGLQLSLLEHFYSQPLSVLCCNLPEAKRRIRFLSANQCENIRRLPSFRRYVEKQSSEKQVALLTSDKFLKEETQSLLENLHVYHKNYFLVLRCLHQFTSSLPKYPLGRQIRELYCMCLEKSIWDSEEYASVLQLLRLLAKDELMAMLQNCFKLFQSSSGKELGNTAKRIEEFLAQFQSLDETKEEEDTSQSQSKGLQKTDLYHLQKSLLEMKELRSTSKRQTKFEVLREQVVSFVDSLVREYLLPPDTQPLHETLYFSSAHTLRQHLNAAPRIALHTALNNPYYYLKNEALRSEEGCIPNVAPDICIAYKLHLECSRLINLVDWSEAFATVVTAAEKMDANSVTSGERNEIIHARFIRAVSELELLGFIKPTKQKTDHVARLTWGGC</sequence>
<comment type="function">
    <text evidence="1">Component of the origin recognition complex (ORC) that binds origins of replication. DNA-binding is ATP-dependent. The specific DNA sequences that define origins of replication have not been identified yet. ORC is required to assemble the pre-replication complex necessary to initiate DNA replication. Binds histone H3 and H4 trimethylation marks H3K9me3, H3K27me3 and H4K20me3.</text>
</comment>
<comment type="subunit">
    <text evidence="1">Component of ORC, a complex composed of at least 6 subunits: ORC1, ORC2, ORC3, ORC4, ORC5 and ORC6. ORC is regulated in a cell-cycle dependent manner. It is sequentially assembled at the exit from anaphase of mitosis and disassembled as cells enter S phase.</text>
</comment>
<comment type="subcellular location">
    <subcellularLocation>
        <location evidence="1">Nucleus</location>
    </subcellularLocation>
    <subcellularLocation>
        <location evidence="1">Chromosome</location>
    </subcellularLocation>
</comment>
<comment type="PTM">
    <text evidence="1">Multi-mono-ubiquitinated by OBI1; ubiquitination is important for efficient DNA replication origin site activation. Ubiquitination levels are low in mitotic and early G1-phAse cells and are induced in late G1-/early S-phase, peaking in S-phase and decrease toward the end of the cell cycle.</text>
</comment>
<comment type="similarity">
    <text evidence="2">Belongs to the ORC3 family.</text>
</comment>
<feature type="chain" id="PRO_0000245348" description="Origin recognition complex subunit 3">
    <location>
        <begin position="1"/>
        <end position="712"/>
    </location>
</feature>
<feature type="modified residue" description="Phosphoserine" evidence="1">
    <location>
        <position position="23"/>
    </location>
</feature>
<feature type="modified residue" description="Phosphoserine" evidence="1">
    <location>
        <position position="516"/>
    </location>
</feature>
<proteinExistence type="evidence at transcript level"/>
<evidence type="ECO:0000250" key="1">
    <source>
        <dbReference type="UniProtKB" id="Q9UBD5"/>
    </source>
</evidence>
<evidence type="ECO:0000305" key="2"/>
<organism>
    <name type="scientific">Bos taurus</name>
    <name type="common">Bovine</name>
    <dbReference type="NCBI Taxonomy" id="9913"/>
    <lineage>
        <taxon>Eukaryota</taxon>
        <taxon>Metazoa</taxon>
        <taxon>Chordata</taxon>
        <taxon>Craniata</taxon>
        <taxon>Vertebrata</taxon>
        <taxon>Euteleostomi</taxon>
        <taxon>Mammalia</taxon>
        <taxon>Eutheria</taxon>
        <taxon>Laurasiatheria</taxon>
        <taxon>Artiodactyla</taxon>
        <taxon>Ruminantia</taxon>
        <taxon>Pecora</taxon>
        <taxon>Bovidae</taxon>
        <taxon>Bovinae</taxon>
        <taxon>Bos</taxon>
    </lineage>
</organism>